<proteinExistence type="evidence at transcript level"/>
<comment type="function">
    <text>This protein is a component of ribonucleosomes.</text>
</comment>
<comment type="subcellular location">
    <subcellularLocation>
        <location evidence="1">Nucleus</location>
    </subcellularLocation>
    <subcellularLocation>
        <location evidence="1">Cytoplasm</location>
    </subcellularLocation>
    <text evidence="1">Shuttles continuously between the nucleus and the cytoplasm along with mRNA.</text>
</comment>
<comment type="alternative products">
    <event type="alternative splicing"/>
    <isoform>
        <id>P17130-1</id>
        <name>A1-A</name>
        <sequence type="displayed"/>
    </isoform>
    <isoform>
        <id>P17130-2</id>
        <name>A1-B</name>
        <sequence type="described" ref="VSP_005826"/>
    </isoform>
</comment>
<organism>
    <name type="scientific">Xenopus laevis</name>
    <name type="common">African clawed frog</name>
    <dbReference type="NCBI Taxonomy" id="8355"/>
    <lineage>
        <taxon>Eukaryota</taxon>
        <taxon>Metazoa</taxon>
        <taxon>Chordata</taxon>
        <taxon>Craniata</taxon>
        <taxon>Vertebrata</taxon>
        <taxon>Euteleostomi</taxon>
        <taxon>Amphibia</taxon>
        <taxon>Batrachia</taxon>
        <taxon>Anura</taxon>
        <taxon>Pipoidea</taxon>
        <taxon>Pipidae</taxon>
        <taxon>Xenopodinae</taxon>
        <taxon>Xenopus</taxon>
        <taxon>Xenopus</taxon>
    </lineage>
</organism>
<feature type="chain" id="PRO_0000081832" description="Heterogeneous nuclear ribonucleoproteins A1 homolog">
    <location>
        <begin position="1"/>
        <end position="365"/>
    </location>
</feature>
<feature type="domain" description="RRM 1" evidence="2">
    <location>
        <begin position="14"/>
        <end position="97"/>
    </location>
</feature>
<feature type="domain" description="RRM 2" evidence="2">
    <location>
        <begin position="105"/>
        <end position="184"/>
    </location>
</feature>
<feature type="region of interest" description="Globular A domain">
    <location>
        <begin position="4"/>
        <end position="94"/>
    </location>
</feature>
<feature type="region of interest" description="Globular B domain">
    <location>
        <begin position="95"/>
        <end position="185"/>
    </location>
</feature>
<feature type="region of interest" description="Disordered" evidence="3">
    <location>
        <begin position="175"/>
        <end position="208"/>
    </location>
</feature>
<feature type="region of interest" description="Nuclear targeting sequence" evidence="1">
    <location>
        <begin position="321"/>
        <end position="359"/>
    </location>
</feature>
<feature type="region of interest" description="Disordered" evidence="3">
    <location>
        <begin position="328"/>
        <end position="365"/>
    </location>
</feature>
<feature type="compositionally biased region" description="Gly residues" evidence="3">
    <location>
        <begin position="198"/>
        <end position="208"/>
    </location>
</feature>
<feature type="compositionally biased region" description="Gly residues" evidence="3">
    <location>
        <begin position="330"/>
        <end position="365"/>
    </location>
</feature>
<feature type="splice variant" id="VSP_005826" description="In isoform A1-B." evidence="4">
    <original>GYGGGSASSSSGYGGGRRF</original>
    <variation>EYPST</variation>
    <location>
        <begin position="347"/>
        <end position="365"/>
    </location>
</feature>
<dbReference type="EMBL" id="M31041">
    <property type="protein sequence ID" value="AAA49741.1"/>
    <property type="molecule type" value="mRNA"/>
</dbReference>
<dbReference type="EMBL" id="M30575">
    <property type="protein sequence ID" value="AAA49742.1"/>
    <property type="molecule type" value="mRNA"/>
</dbReference>
<dbReference type="PIR" id="A34840">
    <property type="entry name" value="A34840"/>
</dbReference>
<dbReference type="PIR" id="B34840">
    <property type="entry name" value="B34840"/>
</dbReference>
<dbReference type="SMR" id="P17130"/>
<dbReference type="AGR" id="Xenbase:XB-GENE-17332048"/>
<dbReference type="Xenbase" id="XB-GENE-17332048">
    <property type="gene designation" value="hnrnpa1.L"/>
</dbReference>
<dbReference type="CD-CODE" id="78E86D56">
    <property type="entry name" value="Mitochondrial cloud"/>
</dbReference>
<dbReference type="Proteomes" id="UP000186698">
    <property type="component" value="Unplaced"/>
</dbReference>
<dbReference type="GO" id="GO:0071013">
    <property type="term" value="C:catalytic step 2 spliceosome"/>
    <property type="evidence" value="ECO:0000318"/>
    <property type="project" value="GO_Central"/>
</dbReference>
<dbReference type="GO" id="GO:0005737">
    <property type="term" value="C:cytoplasm"/>
    <property type="evidence" value="ECO:0007669"/>
    <property type="project" value="UniProtKB-SubCell"/>
</dbReference>
<dbReference type="GO" id="GO:0003730">
    <property type="term" value="F:mRNA 3'-UTR binding"/>
    <property type="evidence" value="ECO:0007669"/>
    <property type="project" value="TreeGrafter"/>
</dbReference>
<dbReference type="GO" id="GO:0000398">
    <property type="term" value="P:mRNA splicing, via spliceosome"/>
    <property type="evidence" value="ECO:0000318"/>
    <property type="project" value="GO_Central"/>
</dbReference>
<dbReference type="CDD" id="cd12761">
    <property type="entry name" value="RRM1_hnRNPA1"/>
    <property type="match status" value="1"/>
</dbReference>
<dbReference type="FunFam" id="3.30.70.330:FF:000048">
    <property type="entry name" value="Heterogeneous nuclear ribonucleoprotein a1 isoform"/>
    <property type="match status" value="1"/>
</dbReference>
<dbReference type="FunFam" id="3.30.70.330:FF:000429">
    <property type="entry name" value="Heterogeneous nuclear ribonucleoprotein A1-like 2"/>
    <property type="match status" value="1"/>
</dbReference>
<dbReference type="Gene3D" id="3.30.70.330">
    <property type="match status" value="2"/>
</dbReference>
<dbReference type="InterPro" id="IPR034845">
    <property type="entry name" value="hnRNPA1_RRM1"/>
</dbReference>
<dbReference type="InterPro" id="IPR012677">
    <property type="entry name" value="Nucleotide-bd_a/b_plait_sf"/>
</dbReference>
<dbReference type="InterPro" id="IPR035979">
    <property type="entry name" value="RBD_domain_sf"/>
</dbReference>
<dbReference type="InterPro" id="IPR000504">
    <property type="entry name" value="RRM_dom"/>
</dbReference>
<dbReference type="PANTHER" id="PTHR48026:SF2">
    <property type="entry name" value="HETEROGENEOUS NUCLEAR RIBONUCLEOPROTEIN A1-RELATED"/>
    <property type="match status" value="1"/>
</dbReference>
<dbReference type="PANTHER" id="PTHR48026">
    <property type="entry name" value="HOMOLOGOUS TO DROSOPHILA SQD (SQUID) PROTEIN"/>
    <property type="match status" value="1"/>
</dbReference>
<dbReference type="Pfam" id="PF00076">
    <property type="entry name" value="RRM_1"/>
    <property type="match status" value="2"/>
</dbReference>
<dbReference type="SMART" id="SM00360">
    <property type="entry name" value="RRM"/>
    <property type="match status" value="2"/>
</dbReference>
<dbReference type="SUPFAM" id="SSF54928">
    <property type="entry name" value="RNA-binding domain, RBD"/>
    <property type="match status" value="2"/>
</dbReference>
<dbReference type="PROSITE" id="PS50102">
    <property type="entry name" value="RRM"/>
    <property type="match status" value="2"/>
</dbReference>
<keyword id="KW-0025">Alternative splicing</keyword>
<keyword id="KW-0963">Cytoplasm</keyword>
<keyword id="KW-0539">Nucleus</keyword>
<keyword id="KW-1185">Reference proteome</keyword>
<keyword id="KW-0677">Repeat</keyword>
<keyword id="KW-0687">Ribonucleoprotein</keyword>
<keyword id="KW-0694">RNA-binding</keyword>
<reference key="1">
    <citation type="journal article" date="1990" name="Proc. Natl. Acad. Sci. U.S.A.">
        <title>Potential for two isoforms of the A1 ribonucleoprotein in Xenopus laevis.</title>
        <authorList>
            <person name="Kay B.K."/>
            <person name="Sawhney R.K."/>
            <person name="Wilson S.H."/>
        </authorList>
    </citation>
    <scope>NUCLEOTIDE SEQUENCE [MRNA] (ISOFORMS A1-A AND A1-B)</scope>
</reference>
<gene>
    <name type="primary">hnrnpa1</name>
    <name type="synonym">hnrpa1</name>
</gene>
<sequence length="365" mass="38317">MHKSEAPNEPEQLRKLFIGGLSFETTDESLREHFEQWGTLTDCVVMRDPNSKRSRGFGFVTYLSTDEVDAAMTARPHKVDGRVVEPKRAVSREDSSRPGAHLTVKKIFVGGIKEDTEEDHLREYFEQYGKIEVIEIMTDRGSGKKRGFAFVTFEDHDSVDKIVIQKYHTVNNHNSQVRKALSKQEMASVSGSQRERGGSGNYGSRGGFGNDNFGGRGGNFGGNRGGGGGFGNRGYGGDGYNGDGQLWWQPSLLGWNRGYGAGQGGGYGAGQGGGYGGGGQGGGYGGNGGYDGYNGGGSGFSGSGGNFGSSGGYNDFGNYNSQSSSNFGPMKGGNYGGGRNSGPYGGGYGGGSASSSSGYGGGRRF</sequence>
<evidence type="ECO:0000250" key="1"/>
<evidence type="ECO:0000255" key="2">
    <source>
        <dbReference type="PROSITE-ProRule" id="PRU00176"/>
    </source>
</evidence>
<evidence type="ECO:0000256" key="3">
    <source>
        <dbReference type="SAM" id="MobiDB-lite"/>
    </source>
</evidence>
<evidence type="ECO:0000303" key="4">
    <source>
    </source>
</evidence>
<name>ROA1_XENLA</name>
<accession>P17130</accession>
<accession>P17131</accession>
<protein>
    <recommendedName>
        <fullName>Heterogeneous nuclear ribonucleoproteins A1 homolog</fullName>
        <shortName>hnRNP A1</shortName>
    </recommendedName>
    <alternativeName>
        <fullName>Helix-destabilizing protein</fullName>
    </alternativeName>
    <alternativeName>
        <fullName>Single-strand-binding protein</fullName>
    </alternativeName>
    <alternativeName>
        <fullName>hnRNP core protein A1</fullName>
    </alternativeName>
</protein>